<reference key="1">
    <citation type="journal article" date="1999" name="Nature">
        <title>Sequence and analysis of chromosome 2 of the plant Arabidopsis thaliana.</title>
        <authorList>
            <person name="Lin X."/>
            <person name="Kaul S."/>
            <person name="Rounsley S.D."/>
            <person name="Shea T.P."/>
            <person name="Benito M.-I."/>
            <person name="Town C.D."/>
            <person name="Fujii C.Y."/>
            <person name="Mason T.M."/>
            <person name="Bowman C.L."/>
            <person name="Barnstead M.E."/>
            <person name="Feldblyum T.V."/>
            <person name="Buell C.R."/>
            <person name="Ketchum K.A."/>
            <person name="Lee J.J."/>
            <person name="Ronning C.M."/>
            <person name="Koo H.L."/>
            <person name="Moffat K.S."/>
            <person name="Cronin L.A."/>
            <person name="Shen M."/>
            <person name="Pai G."/>
            <person name="Van Aken S."/>
            <person name="Umayam L."/>
            <person name="Tallon L.J."/>
            <person name="Gill J.E."/>
            <person name="Adams M.D."/>
            <person name="Carrera A.J."/>
            <person name="Creasy T.H."/>
            <person name="Goodman H.M."/>
            <person name="Somerville C.R."/>
            <person name="Copenhaver G.P."/>
            <person name="Preuss D."/>
            <person name="Nierman W.C."/>
            <person name="White O."/>
            <person name="Eisen J.A."/>
            <person name="Salzberg S.L."/>
            <person name="Fraser C.M."/>
            <person name="Venter J.C."/>
        </authorList>
    </citation>
    <scope>NUCLEOTIDE SEQUENCE [LARGE SCALE GENOMIC DNA]</scope>
    <source>
        <strain>cv. Columbia</strain>
    </source>
</reference>
<reference key="2">
    <citation type="journal article" date="2017" name="Plant J.">
        <title>Araport11: a complete reannotation of the Arabidopsis thaliana reference genome.</title>
        <authorList>
            <person name="Cheng C.Y."/>
            <person name="Krishnakumar V."/>
            <person name="Chan A.P."/>
            <person name="Thibaud-Nissen F."/>
            <person name="Schobel S."/>
            <person name="Town C.D."/>
        </authorList>
    </citation>
    <scope>GENOME REANNOTATION</scope>
    <source>
        <strain>cv. Columbia</strain>
    </source>
</reference>
<reference key="3">
    <citation type="journal article" date="2004" name="Plant Physiol.">
        <title>The gravitropism defective 2 mutants of Arabidopsis are deficient in a protein implicated in endocytosis in Caenorhabditis elegans.</title>
        <authorList>
            <person name="Silady R.A."/>
            <person name="Kato T."/>
            <person name="Lukowitz W."/>
            <person name="Sieber P."/>
            <person name="Tasaka M."/>
            <person name="Somerville C.R."/>
        </authorList>
    </citation>
    <scope>FUNCTION</scope>
    <scope>DISRUPTION PHENOTYPE</scope>
    <scope>TISSUE SPECIFICITY</scope>
    <source>
        <strain>cv. Columbia</strain>
        <strain>cv. Landsberg erecta</strain>
    </source>
</reference>
<reference key="4">
    <citation type="journal article" date="2007" name="Plant Cell">
        <title>Arabidopsis KAM2/GRV2 is required for proper endosome formation and functions in vacuolar sorting and determination of the embryo growth axis.</title>
        <authorList>
            <person name="Tamura K."/>
            <person name="Takahashi H."/>
            <person name="Kunieda T."/>
            <person name="Fuji K."/>
            <person name="Shimada T."/>
            <person name="Hara-Nishimura I."/>
        </authorList>
    </citation>
    <scope>FUNCTION</scope>
    <scope>DISRUPTION PHENOTYPE</scope>
    <scope>DEVELOPMENTAL STAGE</scope>
    <scope>SUBCELLULAR LOCATION</scope>
</reference>
<reference key="5">
    <citation type="journal article" date="2007" name="Plant Cell">
        <title>Arabidopsis vacuolar sorting mutants (green fluorescent seed) can be identified efficiently by secretion of vacuole-targeted green fluorescent protein in their seeds.</title>
        <authorList>
            <person name="Fuji K."/>
            <person name="Shimada T."/>
            <person name="Takahashi H."/>
            <person name="Tamura K."/>
            <person name="Koumoto Y."/>
            <person name="Utsumi S."/>
            <person name="Nishizawa K."/>
            <person name="Maruyama N."/>
            <person name="Hara-Nishimura I."/>
        </authorList>
    </citation>
    <scope>FUNCTION</scope>
    <scope>DISRUPTION PHENOTYPE</scope>
</reference>
<reference key="6">
    <citation type="journal article" date="2008" name="Plant J.">
        <title>The GRV2/RME-8 protein of Arabidopsis functions in the late endocytic pathway and is required for vacuolar membrane flow.</title>
        <authorList>
            <person name="Silady R.A."/>
            <person name="Ehrhardt D.W."/>
            <person name="Jackson K."/>
            <person name="Faulkner C."/>
            <person name="Oparka K."/>
            <person name="Somerville C.R."/>
        </authorList>
    </citation>
    <scope>FUNCTION</scope>
    <scope>SUBCELLULAR LOCATION</scope>
    <scope>TISSUE SPECIFICITY</scope>
</reference>
<reference key="7">
    <citation type="journal article" date="2009" name="Plant Physiol.">
        <title>Large-scale Arabidopsis phosphoproteome profiling reveals novel chloroplast kinase substrates and phosphorylation networks.</title>
        <authorList>
            <person name="Reiland S."/>
            <person name="Messerli G."/>
            <person name="Baerenfaller K."/>
            <person name="Gerrits B."/>
            <person name="Endler A."/>
            <person name="Grossmann J."/>
            <person name="Gruissem W."/>
            <person name="Baginsky S."/>
        </authorList>
    </citation>
    <scope>IDENTIFICATION BY MASS SPECTROMETRY [LARGE SCALE ANALYSIS]</scope>
</reference>
<feature type="chain" id="PRO_0000420922" description="DnaJ homolog subfamily C GRV2">
    <location>
        <begin position="1"/>
        <end position="2554"/>
    </location>
</feature>
<feature type="domain" description="J" evidence="2">
    <location>
        <begin position="1524"/>
        <end position="1606"/>
    </location>
</feature>
<feature type="region of interest" description="Disordered" evidence="3">
    <location>
        <begin position="746"/>
        <end position="766"/>
    </location>
</feature>
<feature type="region of interest" description="Disordered" evidence="3">
    <location>
        <begin position="810"/>
        <end position="833"/>
    </location>
</feature>
<feature type="region of interest" description="Disordered" evidence="3">
    <location>
        <begin position="1960"/>
        <end position="1994"/>
    </location>
</feature>
<feature type="region of interest" description="Disordered" evidence="3">
    <location>
        <begin position="2339"/>
        <end position="2366"/>
    </location>
</feature>
<feature type="coiled-coil region" evidence="1">
    <location>
        <begin position="925"/>
        <end position="951"/>
    </location>
</feature>
<feature type="coiled-coil region" evidence="1">
    <location>
        <begin position="1518"/>
        <end position="1546"/>
    </location>
</feature>
<feature type="compositionally biased region" description="Polar residues" evidence="3">
    <location>
        <begin position="815"/>
        <end position="825"/>
    </location>
</feature>
<feature type="compositionally biased region" description="Polar residues" evidence="3">
    <location>
        <begin position="1966"/>
        <end position="1977"/>
    </location>
</feature>
<feature type="compositionally biased region" description="Basic and acidic residues" evidence="3">
    <location>
        <begin position="1982"/>
        <end position="1994"/>
    </location>
</feature>
<feature type="compositionally biased region" description="Polar residues" evidence="3">
    <location>
        <begin position="2352"/>
        <end position="2366"/>
    </location>
</feature>
<protein>
    <recommendedName>
        <fullName>DnaJ homolog subfamily C GRV2</fullName>
    </recommendedName>
    <alternativeName>
        <fullName>Protein GRAVITROPISM DEFECTIVE 2</fullName>
    </alternativeName>
    <alternativeName>
        <fullName>Protein GREEN FLUORESCENT SEED 2</fullName>
    </alternativeName>
    <alternativeName>
        <fullName>Protein KATAMARI2</fullName>
    </alternativeName>
</protein>
<proteinExistence type="evidence at protein level"/>
<sequence length="2554" mass="279073">MDSVSRGAVASTTGGAVEEPEYLARYLVVKHSWRGRYKRILCISSGGIVTLDPNTLAVTNSYDTGSNFDGASPLVGRDENTESVGGEFTVNVRTDGKGKFKAMKFSSRCRASILTELYRLRWNQIRPVAEFQVLHLRRRNAEWVPYKLKITFVGLELVDSKSGNSRWILDFRDMGSPAIILLSDAYRTKSADSAGFVLCPMYGRKSKAFRAAPGTTNSSIVASLAKTAKSMVGVFLSVDDSQLLTVSEYMTRRAKEAVGAEETPNGWWSVTRLRSAAHGTLNMPGLSLAIGPKGGLGEHGDAVALQLILTKASLVERRIDNYEVVIVRPLSSVSSLVRFAEEPQMFAIEFSDGCPVLVYASISRDNLLAAILDTLQTEGHCPIPVLPRLTMPGHRIDPPCGRVSLISGPQHLVADLETCSLHLKHLAAAAKDAVAEGGSVPGCRARLWRRIREFNACIPYTGVPANSEVPEVTLMALITMLPSTPNLPVDAPPLPPPSPKAAATVIGFVTCLRRLLSSRSAASHIMSFPAAVNRIMGLLRNGSEGVAAEAAGLIASLIGGWSADLSTAPDSRGEKHATIMHTKSVLFAQQGYVTILVNRLKPMSVSPLFSMAIVEVFEAMVCDPHGETTQYTVFVELLRQIAALRRRLFALFAHPAESVRETIAVIMRTIAEEDAIAAESMRDAALRDGALLRHLLNAFSLPASERREVSRQLVALWADSYQPALDLLSRVLPPGLVAYLHTRPDDVVDDTDQEGSSTNRRQKRLLQQRRGRIAKGMGAQDIPLPPGNNVEAGDAAKHMSANASVPDNFQRRAADSSSEASNPQASAFPGVDSTIAGVSQNGYPAFASVTTNANGHEQPETNASDVVGSDPNLYGIQNSVLPAPAQVIVESTAVGSGKLLLNWREFWRAFGLDHNRADLIWNERTRQELIEALKAEVHNLDVEKERTEDISPGDVEATTGQEIIPRISWNYSEFSVSYRSLSKEVCVGQYYLRLLLESGNAGKAQDFPLRDPVAFFRALYHRFQCDADMGLTIDGAVPDELGSSGDWCDMSRLDGFGGGGGASVRELCARAMAIVYEQHYNTIGPFEGTAHITALIDRTNDRALRHRLLLLLKALVKVLLNVEGCVVVGGCVLAVDLLTVVHENSERTPIPLQSNLIAATAFMEPPKEWMYIDKGGAEVGPVEKDVIRSLWSKKDIDWTTKCRALGMSDWKKLRDIRELRWAVAVRVPVLTPSQVGDAALSILHSMVSAHSDLDDAGEIVTPTPRVKRILSSTRCLPHIAQALLSGEPVIVEAGAALLKDVVTRNSKAMIRLYSTGAFYFALAYPGSNLYSIAQLFSVTHVHQAFHGGEEATVSSSLPLAKRSVLGGLLPESLLYVLERSGPAAFAAGMVSDSDTPEIIWTHKMRAENLICQVLQHLGDYPQKLSQHCHSLYDYAPMPPVTYPELRDEMWCHRYYLRNLCDEIQFPNWPIVEHVEFLQSLLVMWREELTRKPMDLSEGEACKILEISLNNVSSDDLNRTASVELNEEISNISKQIQNLDEEKLKRQYRKLAMRYHPDKNPEGREKFLAVQKAYECLQATMQGLQGPQPWRLLLLLKAQCILYRRYGHVLRPFKYAGYPMLLDAVTVDKDDNNFLSNDRSPLLVAASELVSLTCAASSLNGEELVRDGGVQLLSTLLSRCMCVVQPTTSQHEPAAIIVTNVMRTLSVISQFESARAGFLELPSLIEDIVHCTELERVPAAVDAALQSIAKVSVFPELQHGLLKAGALWYILPLLLQYDSTAEESNSVESHGVGVSIQIAKNEHALQASQALSRLTGLCADESLTPYNATAADVLKALLTPKLASLLKDEVAKDLLSKLNTNLETPEIIWNSATRSELLNFVDEQRACQCPDGSYDLKNAQSFSYDALSKEVFVGNVYLKVYNDQPDSEISEPESFCNALIDFISSLVHTELPSVSEDQNLIEDRNSSNDTPELQSSVAEPSLIEEHSDHQPSSEGMKNEECFLIDHLQLGLTALQNLLTKYPDLASVFSSKERLLPLFECFSVAIASKTDIPKLCLNVLSRLTAYAPCLETMVSDGSSLLLLLQMLHSAPSFREGALHVLYALASTPELAWAAAKHGGVVYILELLLPLQKEIPLQQRAAAASLLGKLVAQPMHGPRVAITLVRFLPDGLVSIIRDGPGEAVVHALERTTETPELVWTPAMAASLSAQIATMASDIYREQQKGSVIEWDVPEQSAGQQEMRDEPQVGGIYVRRFLKDPKFPLRNPKRFLEGLLDQYLSAMAATHYEQHPVDPELPLLLSAALVSLLRVHPALADHIGHLGYVPKLVAAVAYEGRRETMSSGEVKAEEIGSDGVNESTDPSSLPGQTPQERVRLSCLRVLHQLAASTTCAEAMAATSAGNAQVVPLLMKAIGWLGGSILALETLKRVVVAGNRARDALVAQGLKVGLIEVLLGLLDWRTGGRYGLSSHMKWNESEASIGRVLAVEVLHGFATEGAHCSKVREILDASEVWSAYKDQKHDLFLPSNTQSAAGVAGFIENSSNSLTYALTAPPPPSHP</sequence>
<evidence type="ECO:0000255" key="1"/>
<evidence type="ECO:0000255" key="2">
    <source>
        <dbReference type="PROSITE-ProRule" id="PRU00286"/>
    </source>
</evidence>
<evidence type="ECO:0000256" key="3">
    <source>
        <dbReference type="SAM" id="MobiDB-lite"/>
    </source>
</evidence>
<evidence type="ECO:0000269" key="4">
    <source>
    </source>
</evidence>
<evidence type="ECO:0000269" key="5">
    <source>
    </source>
</evidence>
<evidence type="ECO:0000269" key="6">
    <source>
    </source>
</evidence>
<evidence type="ECO:0000269" key="7">
    <source>
    </source>
</evidence>
<evidence type="ECO:0000305" key="8"/>
<accession>F4IVL6</accession>
<accession>B3H5B3</accession>
<accession>O81018</accession>
<gene>
    <name type="primary">GRV2</name>
    <name type="synonym">GFS2</name>
    <name type="synonym">KAM2</name>
    <name type="ordered locus">At2g26890</name>
    <name type="ORF">F12C20.7</name>
</gene>
<dbReference type="EMBL" id="AC005168">
    <property type="protein sequence ID" value="AAC32237.1"/>
    <property type="status" value="ALT_SEQ"/>
    <property type="molecule type" value="Genomic_DNA"/>
</dbReference>
<dbReference type="EMBL" id="CP002685">
    <property type="protein sequence ID" value="AEC07904.1"/>
    <property type="molecule type" value="Genomic_DNA"/>
</dbReference>
<dbReference type="PIR" id="T02646">
    <property type="entry name" value="T02646"/>
</dbReference>
<dbReference type="RefSeq" id="NP_180257.3">
    <property type="nucleotide sequence ID" value="NM_128246.5"/>
</dbReference>
<dbReference type="BioGRID" id="2582">
    <property type="interactions" value="1"/>
</dbReference>
<dbReference type="FunCoup" id="F4IVL6">
    <property type="interactions" value="4281"/>
</dbReference>
<dbReference type="STRING" id="3702.F4IVL6"/>
<dbReference type="TCDB" id="8.A.192.2.4">
    <property type="family name" value="the dnaj homolog (dnaj) family"/>
</dbReference>
<dbReference type="iPTMnet" id="F4IVL6"/>
<dbReference type="PaxDb" id="3702-AT2G26890.1"/>
<dbReference type="ProteomicsDB" id="222277"/>
<dbReference type="EnsemblPlants" id="AT2G26890.1">
    <property type="protein sequence ID" value="AT2G26890.1"/>
    <property type="gene ID" value="AT2G26890"/>
</dbReference>
<dbReference type="GeneID" id="817230"/>
<dbReference type="Gramene" id="AT2G26890.1">
    <property type="protein sequence ID" value="AT2G26890.1"/>
    <property type="gene ID" value="AT2G26890"/>
</dbReference>
<dbReference type="KEGG" id="ath:AT2G26890"/>
<dbReference type="Araport" id="AT2G26890"/>
<dbReference type="TAIR" id="AT2G26890">
    <property type="gene designation" value="GRV2"/>
</dbReference>
<dbReference type="eggNOG" id="KOG1789">
    <property type="taxonomic scope" value="Eukaryota"/>
</dbReference>
<dbReference type="HOGENOM" id="CLU_001238_1_0_1"/>
<dbReference type="InParanoid" id="F4IVL6"/>
<dbReference type="OMA" id="PQTYSIC"/>
<dbReference type="CD-CODE" id="4299E36E">
    <property type="entry name" value="Nucleolus"/>
</dbReference>
<dbReference type="PRO" id="PR:F4IVL6"/>
<dbReference type="Proteomes" id="UP000006548">
    <property type="component" value="Chromosome 2"/>
</dbReference>
<dbReference type="ExpressionAtlas" id="F4IVL6">
    <property type="expression patterns" value="baseline and differential"/>
</dbReference>
<dbReference type="GO" id="GO:0005783">
    <property type="term" value="C:endoplasmic reticulum"/>
    <property type="evidence" value="ECO:0000314"/>
    <property type="project" value="TAIR"/>
</dbReference>
<dbReference type="GO" id="GO:0005794">
    <property type="term" value="C:Golgi apparatus"/>
    <property type="evidence" value="ECO:0007005"/>
    <property type="project" value="TAIR"/>
</dbReference>
<dbReference type="GO" id="GO:0043231">
    <property type="term" value="C:intracellular membrane-bounded organelle"/>
    <property type="evidence" value="ECO:0000314"/>
    <property type="project" value="TAIR"/>
</dbReference>
<dbReference type="GO" id="GO:0005770">
    <property type="term" value="C:late endosome"/>
    <property type="evidence" value="ECO:0000314"/>
    <property type="project" value="TAIR"/>
</dbReference>
<dbReference type="GO" id="GO:0031902">
    <property type="term" value="C:late endosome membrane"/>
    <property type="evidence" value="ECO:0000314"/>
    <property type="project" value="UniProtKB"/>
</dbReference>
<dbReference type="GO" id="GO:0005777">
    <property type="term" value="C:peroxisome"/>
    <property type="evidence" value="ECO:0007005"/>
    <property type="project" value="TAIR"/>
</dbReference>
<dbReference type="GO" id="GO:0005802">
    <property type="term" value="C:trans-Golgi network"/>
    <property type="evidence" value="ECO:0000314"/>
    <property type="project" value="TAIR"/>
</dbReference>
<dbReference type="GO" id="GO:0005774">
    <property type="term" value="C:vacuolar membrane"/>
    <property type="evidence" value="ECO:0000314"/>
    <property type="project" value="TAIR"/>
</dbReference>
<dbReference type="GO" id="GO:0005773">
    <property type="term" value="C:vacuole"/>
    <property type="evidence" value="ECO:0007005"/>
    <property type="project" value="TAIR"/>
</dbReference>
<dbReference type="GO" id="GO:0009660">
    <property type="term" value="P:amyloplast organization"/>
    <property type="evidence" value="ECO:0000315"/>
    <property type="project" value="TAIR"/>
</dbReference>
<dbReference type="GO" id="GO:0051301">
    <property type="term" value="P:cell division"/>
    <property type="evidence" value="ECO:0000315"/>
    <property type="project" value="TAIR"/>
</dbReference>
<dbReference type="GO" id="GO:0009793">
    <property type="term" value="P:embryo development ending in seed dormancy"/>
    <property type="evidence" value="ECO:0000315"/>
    <property type="project" value="TAIR"/>
</dbReference>
<dbReference type="GO" id="GO:0000578">
    <property type="term" value="P:embryonic axis specification"/>
    <property type="evidence" value="ECO:0000315"/>
    <property type="project" value="UniProtKB"/>
</dbReference>
<dbReference type="GO" id="GO:0006897">
    <property type="term" value="P:endocytosis"/>
    <property type="evidence" value="ECO:0000250"/>
    <property type="project" value="TAIR"/>
</dbReference>
<dbReference type="GO" id="GO:0007032">
    <property type="term" value="P:endosome organization"/>
    <property type="evidence" value="ECO:0000315"/>
    <property type="project" value="TAIR"/>
</dbReference>
<dbReference type="GO" id="GO:0045324">
    <property type="term" value="P:late endosome to vacuole transport"/>
    <property type="evidence" value="ECO:0000315"/>
    <property type="project" value="UniProtKB"/>
</dbReference>
<dbReference type="GO" id="GO:0009959">
    <property type="term" value="P:negative gravitropism"/>
    <property type="evidence" value="ECO:0000315"/>
    <property type="project" value="TAIR"/>
</dbReference>
<dbReference type="GO" id="GO:0009638">
    <property type="term" value="P:phototropism"/>
    <property type="evidence" value="ECO:0000315"/>
    <property type="project" value="UniProtKB"/>
</dbReference>
<dbReference type="GO" id="GO:0006623">
    <property type="term" value="P:protein targeting to vacuole"/>
    <property type="evidence" value="ECO:0000315"/>
    <property type="project" value="UniProtKB"/>
</dbReference>
<dbReference type="GO" id="GO:2000641">
    <property type="term" value="P:regulation of early endosome to late endosome transport"/>
    <property type="evidence" value="ECO:0007669"/>
    <property type="project" value="InterPro"/>
</dbReference>
<dbReference type="GO" id="GO:0042594">
    <property type="term" value="P:response to starvation"/>
    <property type="evidence" value="ECO:0000315"/>
    <property type="project" value="TAIR"/>
</dbReference>
<dbReference type="GO" id="GO:0007033">
    <property type="term" value="P:vacuole organization"/>
    <property type="evidence" value="ECO:0000315"/>
    <property type="project" value="TAIR"/>
</dbReference>
<dbReference type="CDD" id="cd06257">
    <property type="entry name" value="DnaJ"/>
    <property type="match status" value="1"/>
</dbReference>
<dbReference type="FunFam" id="1.10.287.110:FF:000030">
    <property type="entry name" value="DnaJ homolog subfamily C GRV2"/>
    <property type="match status" value="1"/>
</dbReference>
<dbReference type="FunFam" id="1.25.10.10:FF:000180">
    <property type="entry name" value="DnaJ homolog subfamily C GRV2"/>
    <property type="match status" value="1"/>
</dbReference>
<dbReference type="FunFam" id="1.25.10.10:FF:000553">
    <property type="entry name" value="dnaJ homolog subfamily C GRV2 isoform X2"/>
    <property type="match status" value="1"/>
</dbReference>
<dbReference type="Gene3D" id="1.10.287.110">
    <property type="entry name" value="DnaJ domain"/>
    <property type="match status" value="1"/>
</dbReference>
<dbReference type="Gene3D" id="1.25.10.10">
    <property type="entry name" value="Leucine-rich Repeat Variant"/>
    <property type="match status" value="2"/>
</dbReference>
<dbReference type="InterPro" id="IPR011989">
    <property type="entry name" value="ARM-like"/>
</dbReference>
<dbReference type="InterPro" id="IPR016024">
    <property type="entry name" value="ARM-type_fold"/>
</dbReference>
<dbReference type="InterPro" id="IPR001623">
    <property type="entry name" value="DnaJ_domain"/>
</dbReference>
<dbReference type="InterPro" id="IPR044978">
    <property type="entry name" value="GRV2/DNAJC13"/>
</dbReference>
<dbReference type="InterPro" id="IPR045802">
    <property type="entry name" value="GRV2/DNAJC13_N"/>
</dbReference>
<dbReference type="InterPro" id="IPR025640">
    <property type="entry name" value="GYF_2"/>
</dbReference>
<dbReference type="InterPro" id="IPR036869">
    <property type="entry name" value="J_dom_sf"/>
</dbReference>
<dbReference type="PANTHER" id="PTHR36983">
    <property type="entry name" value="DNAJ HOMOLOG SUBFAMILY C MEMBER 13"/>
    <property type="match status" value="1"/>
</dbReference>
<dbReference type="PANTHER" id="PTHR36983:SF2">
    <property type="entry name" value="DNAJ HOMOLOG SUBFAMILY C MEMBER 13"/>
    <property type="match status" value="1"/>
</dbReference>
<dbReference type="Pfam" id="PF00226">
    <property type="entry name" value="DnaJ"/>
    <property type="match status" value="1"/>
</dbReference>
<dbReference type="Pfam" id="PF14237">
    <property type="entry name" value="GYF_2"/>
    <property type="match status" value="1"/>
</dbReference>
<dbReference type="Pfam" id="PF19432">
    <property type="entry name" value="RME-8_N"/>
    <property type="match status" value="3"/>
</dbReference>
<dbReference type="SMART" id="SM00271">
    <property type="entry name" value="DnaJ"/>
    <property type="match status" value="1"/>
</dbReference>
<dbReference type="SUPFAM" id="SSF48371">
    <property type="entry name" value="ARM repeat"/>
    <property type="match status" value="2"/>
</dbReference>
<dbReference type="SUPFAM" id="SSF46565">
    <property type="entry name" value="Chaperone J-domain"/>
    <property type="match status" value="1"/>
</dbReference>
<dbReference type="PROSITE" id="PS50076">
    <property type="entry name" value="DNAJ_2"/>
    <property type="match status" value="1"/>
</dbReference>
<keyword id="KW-0143">Chaperone</keyword>
<keyword id="KW-0175">Coiled coil</keyword>
<keyword id="KW-0217">Developmental protein</keyword>
<keyword id="KW-0967">Endosome</keyword>
<keyword id="KW-0472">Membrane</keyword>
<keyword id="KW-0653">Protein transport</keyword>
<keyword id="KW-1185">Reference proteome</keyword>
<keyword id="KW-0346">Stress response</keyword>
<keyword id="KW-0813">Transport</keyword>
<name>GRV2_ARATH</name>
<comment type="function">
    <text evidence="4 5 6 7">Required for endosome formation, vacuolar protein sorting and determination of the embryo growth axis. Necessary for the transport of proteins into protein storage vacuoles (PSVs). Participates in vesicle trafficking from the endosome to the central vacuole. Involved in the regulation of shoot phototropism and gravitropism, probably through the positioning of specialized amyloplasts (statoliths) in endodermal cells.</text>
</comment>
<comment type="subcellular location">
    <subcellularLocation>
        <location evidence="5 7">Endosome membrane</location>
        <topology evidence="5">Peripheral membrane protein</topology>
    </subcellularLocation>
</comment>
<comment type="tissue specificity">
    <text evidence="4 7">Constitutively expressed in roots, hypocotyls, leaves (e.g. vascular tissues), stems, flowers (e.g. petals and stigmas), siliques and pollen.</text>
</comment>
<comment type="developmental stage">
    <text evidence="5">Expressed at the early to middle stages of seed maturation.</text>
</comment>
<comment type="disruption phenotype">
    <text evidence="4 5 6">Reduced shoot phototropism and gravitropism, and impaired embryo growth axis (e.g. between the late torpedo-shaped embryo stage and the walking stick-shaped embryo stage). Abnormal amyloplasts position and sedimentation in endodermal cells. Defect in the organization of endomembranes characterized by aggregated endomembrane structures accompanied by a missorting of storage proteins.</text>
</comment>
<comment type="miscellaneous">
    <text>'Katamari' means 'aggregate' in Japanese.</text>
</comment>
<comment type="sequence caution" evidence="8">
    <conflict type="erroneous gene model prediction">
        <sequence resource="EMBL-CDS" id="AAC32237"/>
    </conflict>
</comment>
<organism>
    <name type="scientific">Arabidopsis thaliana</name>
    <name type="common">Mouse-ear cress</name>
    <dbReference type="NCBI Taxonomy" id="3702"/>
    <lineage>
        <taxon>Eukaryota</taxon>
        <taxon>Viridiplantae</taxon>
        <taxon>Streptophyta</taxon>
        <taxon>Embryophyta</taxon>
        <taxon>Tracheophyta</taxon>
        <taxon>Spermatophyta</taxon>
        <taxon>Magnoliopsida</taxon>
        <taxon>eudicotyledons</taxon>
        <taxon>Gunneridae</taxon>
        <taxon>Pentapetalae</taxon>
        <taxon>rosids</taxon>
        <taxon>malvids</taxon>
        <taxon>Brassicales</taxon>
        <taxon>Brassicaceae</taxon>
        <taxon>Camelineae</taxon>
        <taxon>Arabidopsis</taxon>
    </lineage>
</organism>